<keyword id="KW-0150">Chloroplast</keyword>
<keyword id="KW-0328">Glycosyltransferase</keyword>
<keyword id="KW-0934">Plastid</keyword>
<keyword id="KW-0662">Pyridine nucleotide biosynthesis</keyword>
<keyword id="KW-1185">Reference proteome</keyword>
<keyword id="KW-0808">Transferase</keyword>
<keyword id="KW-0809">Transit peptide</keyword>
<organism>
    <name type="scientific">Oryza sativa subsp. japonica</name>
    <name type="common">Rice</name>
    <dbReference type="NCBI Taxonomy" id="39947"/>
    <lineage>
        <taxon>Eukaryota</taxon>
        <taxon>Viridiplantae</taxon>
        <taxon>Streptophyta</taxon>
        <taxon>Embryophyta</taxon>
        <taxon>Tracheophyta</taxon>
        <taxon>Spermatophyta</taxon>
        <taxon>Magnoliopsida</taxon>
        <taxon>Liliopsida</taxon>
        <taxon>Poales</taxon>
        <taxon>Poaceae</taxon>
        <taxon>BOP clade</taxon>
        <taxon>Oryzoideae</taxon>
        <taxon>Oryzeae</taxon>
        <taxon>Oryzinae</taxon>
        <taxon>Oryza</taxon>
        <taxon>Oryza sativa</taxon>
    </lineage>
</organism>
<feature type="transit peptide" description="Chloroplast" evidence="2">
    <location>
        <begin position="1"/>
        <end position="48"/>
    </location>
</feature>
<feature type="chain" id="PRO_0000423481" description="Nicotinate-nucleotide pyrophosphorylase [carboxylating], chloroplastic">
    <location>
        <begin position="49"/>
        <end position="371"/>
    </location>
</feature>
<feature type="binding site" evidence="1">
    <location>
        <position position="162"/>
    </location>
    <ligand>
        <name>substrate</name>
    </ligand>
</feature>
<feature type="binding site" evidence="1">
    <location>
        <begin position="193"/>
        <end position="195"/>
    </location>
    <ligand>
        <name>substrate</name>
    </ligand>
</feature>
<feature type="binding site" evidence="1">
    <location>
        <position position="217"/>
    </location>
    <ligand>
        <name>substrate</name>
    </ligand>
</feature>
<feature type="binding site" evidence="1">
    <location>
        <position position="227"/>
    </location>
    <ligand>
        <name>substrate</name>
    </ligand>
</feature>
<feature type="binding site" evidence="1">
    <location>
        <position position="260"/>
    </location>
    <ligand>
        <name>substrate</name>
    </ligand>
</feature>
<feature type="binding site" evidence="1">
    <location>
        <position position="287"/>
    </location>
    <ligand>
        <name>substrate</name>
    </ligand>
</feature>
<feature type="binding site" evidence="1">
    <location>
        <begin position="319"/>
        <end position="321"/>
    </location>
    <ligand>
        <name>substrate</name>
    </ligand>
</feature>
<feature type="binding site" evidence="1">
    <location>
        <begin position="340"/>
        <end position="342"/>
    </location>
    <ligand>
        <name>substrate</name>
    </ligand>
</feature>
<proteinExistence type="evidence at transcript level"/>
<dbReference type="EC" id="2.4.2.19"/>
<dbReference type="EMBL" id="AP008215">
    <property type="protein sequence ID" value="BAF25795.1"/>
    <property type="molecule type" value="Genomic_DNA"/>
</dbReference>
<dbReference type="EMBL" id="AP014965">
    <property type="protein sequence ID" value="BAT09328.1"/>
    <property type="molecule type" value="Genomic_DNA"/>
</dbReference>
<dbReference type="EMBL" id="CM000146">
    <property type="protein sequence ID" value="EEE70191.1"/>
    <property type="molecule type" value="Genomic_DNA"/>
</dbReference>
<dbReference type="EMBL" id="AK068240">
    <property type="protein sequence ID" value="BAG90819.1"/>
    <property type="molecule type" value="mRNA"/>
</dbReference>
<dbReference type="RefSeq" id="XP_015612687.1">
    <property type="nucleotide sequence ID" value="XM_015757201.1"/>
</dbReference>
<dbReference type="SMR" id="Q0IZS0"/>
<dbReference type="FunCoup" id="Q0IZS0">
    <property type="interactions" value="1153"/>
</dbReference>
<dbReference type="STRING" id="39947.Q0IZS0"/>
<dbReference type="PaxDb" id="39947-Q0IZS0"/>
<dbReference type="EnsemblPlants" id="Os09t0553600-01">
    <property type="protein sequence ID" value="Os09t0553600-01"/>
    <property type="gene ID" value="Os09g0553600"/>
</dbReference>
<dbReference type="GeneID" id="4347802"/>
<dbReference type="Gramene" id="Os09t0553600-01">
    <property type="protein sequence ID" value="Os09t0553600-01"/>
    <property type="gene ID" value="Os09g0553600"/>
</dbReference>
<dbReference type="KEGG" id="dosa:Os09g0553600"/>
<dbReference type="KEGG" id="osa:4347802"/>
<dbReference type="eggNOG" id="KOG3008">
    <property type="taxonomic scope" value="Eukaryota"/>
</dbReference>
<dbReference type="HOGENOM" id="CLU_039622_0_2_1"/>
<dbReference type="InParanoid" id="Q0IZS0"/>
<dbReference type="OMA" id="DIVMCDN"/>
<dbReference type="OrthoDB" id="10067394at2759"/>
<dbReference type="PlantReactome" id="R-OSA-1119384">
    <property type="pathway name" value="NAD biosynthesis I (from aspartate)"/>
</dbReference>
<dbReference type="UniPathway" id="UPA00253">
    <property type="reaction ID" value="UER00331"/>
</dbReference>
<dbReference type="Proteomes" id="UP000000763">
    <property type="component" value="Chromosome 9"/>
</dbReference>
<dbReference type="Proteomes" id="UP000007752">
    <property type="component" value="Chromosome 9"/>
</dbReference>
<dbReference type="Proteomes" id="UP000059680">
    <property type="component" value="Chromosome 9"/>
</dbReference>
<dbReference type="GO" id="GO:0009507">
    <property type="term" value="C:chloroplast"/>
    <property type="evidence" value="ECO:0007669"/>
    <property type="project" value="UniProtKB-SubCell"/>
</dbReference>
<dbReference type="GO" id="GO:0005737">
    <property type="term" value="C:cytoplasm"/>
    <property type="evidence" value="ECO:0000318"/>
    <property type="project" value="GO_Central"/>
</dbReference>
<dbReference type="GO" id="GO:0004514">
    <property type="term" value="F:nicotinate-nucleotide diphosphorylase (carboxylating) activity"/>
    <property type="evidence" value="ECO:0000318"/>
    <property type="project" value="GO_Central"/>
</dbReference>
<dbReference type="GO" id="GO:0009435">
    <property type="term" value="P:NAD biosynthetic process"/>
    <property type="evidence" value="ECO:0000318"/>
    <property type="project" value="GO_Central"/>
</dbReference>
<dbReference type="GO" id="GO:0034213">
    <property type="term" value="P:quinolinate catabolic process"/>
    <property type="evidence" value="ECO:0000318"/>
    <property type="project" value="GO_Central"/>
</dbReference>
<dbReference type="CDD" id="cd01572">
    <property type="entry name" value="QPRTase"/>
    <property type="match status" value="1"/>
</dbReference>
<dbReference type="FunFam" id="3.90.1170.20:FF:000001">
    <property type="entry name" value="Nicotinate-nucleotide diphosphorylase (Carboxylating)"/>
    <property type="match status" value="1"/>
</dbReference>
<dbReference type="FunFam" id="3.20.20.70:FF:000149">
    <property type="entry name" value="Nicotinate-nucleotide pyrophosphorylase [carboxylating]"/>
    <property type="match status" value="1"/>
</dbReference>
<dbReference type="Gene3D" id="3.20.20.70">
    <property type="entry name" value="Aldolase class I"/>
    <property type="match status" value="1"/>
</dbReference>
<dbReference type="Gene3D" id="3.90.1170.20">
    <property type="entry name" value="Quinolinate phosphoribosyl transferase, N-terminal domain"/>
    <property type="match status" value="1"/>
</dbReference>
<dbReference type="InterPro" id="IPR013785">
    <property type="entry name" value="Aldolase_TIM"/>
</dbReference>
<dbReference type="InterPro" id="IPR004393">
    <property type="entry name" value="NadC"/>
</dbReference>
<dbReference type="InterPro" id="IPR027277">
    <property type="entry name" value="NadC/ModD"/>
</dbReference>
<dbReference type="InterPro" id="IPR036068">
    <property type="entry name" value="Nicotinate_pribotase-like_C"/>
</dbReference>
<dbReference type="InterPro" id="IPR037128">
    <property type="entry name" value="Quinolinate_PRibosylTase_N_sf"/>
</dbReference>
<dbReference type="InterPro" id="IPR002638">
    <property type="entry name" value="Quinolinate_PRibosylTrfase_C"/>
</dbReference>
<dbReference type="InterPro" id="IPR022412">
    <property type="entry name" value="Quinolinate_PRibosylTrfase_N"/>
</dbReference>
<dbReference type="NCBIfam" id="TIGR00078">
    <property type="entry name" value="nadC"/>
    <property type="match status" value="1"/>
</dbReference>
<dbReference type="PANTHER" id="PTHR32179">
    <property type="entry name" value="NICOTINATE-NUCLEOTIDE PYROPHOSPHORYLASE [CARBOXYLATING]"/>
    <property type="match status" value="1"/>
</dbReference>
<dbReference type="PANTHER" id="PTHR32179:SF3">
    <property type="entry name" value="NICOTINATE-NUCLEOTIDE PYROPHOSPHORYLASE [CARBOXYLATING]"/>
    <property type="match status" value="1"/>
</dbReference>
<dbReference type="Pfam" id="PF01729">
    <property type="entry name" value="QRPTase_C"/>
    <property type="match status" value="1"/>
</dbReference>
<dbReference type="Pfam" id="PF02749">
    <property type="entry name" value="QRPTase_N"/>
    <property type="match status" value="1"/>
</dbReference>
<dbReference type="SUPFAM" id="SSF51690">
    <property type="entry name" value="Nicotinate/Quinolinate PRTase C-terminal domain-like"/>
    <property type="match status" value="1"/>
</dbReference>
<dbReference type="SUPFAM" id="SSF54675">
    <property type="entry name" value="Nicotinate/Quinolinate PRTase N-terminal domain-like"/>
    <property type="match status" value="1"/>
</dbReference>
<sequence length="371" mass="39926">MPAAAAAAAPPNPNVLQLAPRLRGLVSFPSSYSSSSPFSNRLRLRLPRAASMSAEARVPVAPPAHPTYDLKAVINLALSEDAGDRGDVSCLATIPSDVKAEATFIAKEDGVVAGISLADMIFKQVDPSLKVEWFESDGNYVHKGLQFGRVYGCARNIIVAERVVLNFMQRMSGIATMTKAMADAAHPACILETRKTAPGLRLVDKWAVLIGGGKNHRIGLFDMVMIKDNHISVAGGITNAMKFVDRFLAKEKLALPVEVETRTLQEVKDLLEYAAENNTSLTRIMLDNMVVPLGNGDIDVSMLKDAVELINGRFETEASGNVTIDTVKKIGETGVTYISSGALTHSVKALDISLKIDTELALQVGRRTNRA</sequence>
<name>NADC_ORYSJ</name>
<protein>
    <recommendedName>
        <fullName>Nicotinate-nucleotide pyrophosphorylase [carboxylating], chloroplastic</fullName>
        <ecNumber>2.4.2.19</ecNumber>
    </recommendedName>
    <alternativeName>
        <fullName>Quinolinate phosphoribosyltransferase [decarboxylating]</fullName>
    </alternativeName>
</protein>
<reference key="1">
    <citation type="journal article" date="2005" name="Nature">
        <title>The map-based sequence of the rice genome.</title>
        <authorList>
            <consortium name="International rice genome sequencing project (IRGSP)"/>
        </authorList>
    </citation>
    <scope>NUCLEOTIDE SEQUENCE [LARGE SCALE GENOMIC DNA]</scope>
    <source>
        <strain>cv. Nipponbare</strain>
    </source>
</reference>
<reference key="2">
    <citation type="journal article" date="2008" name="Nucleic Acids Res.">
        <title>The rice annotation project database (RAP-DB): 2008 update.</title>
        <authorList>
            <consortium name="The rice annotation project (RAP)"/>
        </authorList>
    </citation>
    <scope>GENOME REANNOTATION</scope>
    <source>
        <strain>cv. Nipponbare</strain>
    </source>
</reference>
<reference key="3">
    <citation type="journal article" date="2013" name="Rice">
        <title>Improvement of the Oryza sativa Nipponbare reference genome using next generation sequence and optical map data.</title>
        <authorList>
            <person name="Kawahara Y."/>
            <person name="de la Bastide M."/>
            <person name="Hamilton J.P."/>
            <person name="Kanamori H."/>
            <person name="McCombie W.R."/>
            <person name="Ouyang S."/>
            <person name="Schwartz D.C."/>
            <person name="Tanaka T."/>
            <person name="Wu J."/>
            <person name="Zhou S."/>
            <person name="Childs K.L."/>
            <person name="Davidson R.M."/>
            <person name="Lin H."/>
            <person name="Quesada-Ocampo L."/>
            <person name="Vaillancourt B."/>
            <person name="Sakai H."/>
            <person name="Lee S.S."/>
            <person name="Kim J."/>
            <person name="Numa H."/>
            <person name="Itoh T."/>
            <person name="Buell C.R."/>
            <person name="Matsumoto T."/>
        </authorList>
    </citation>
    <scope>GENOME REANNOTATION</scope>
    <source>
        <strain>cv. Nipponbare</strain>
    </source>
</reference>
<reference key="4">
    <citation type="journal article" date="2005" name="PLoS Biol.">
        <title>The genomes of Oryza sativa: a history of duplications.</title>
        <authorList>
            <person name="Yu J."/>
            <person name="Wang J."/>
            <person name="Lin W."/>
            <person name="Li S."/>
            <person name="Li H."/>
            <person name="Zhou J."/>
            <person name="Ni P."/>
            <person name="Dong W."/>
            <person name="Hu S."/>
            <person name="Zeng C."/>
            <person name="Zhang J."/>
            <person name="Zhang Y."/>
            <person name="Li R."/>
            <person name="Xu Z."/>
            <person name="Li S."/>
            <person name="Li X."/>
            <person name="Zheng H."/>
            <person name="Cong L."/>
            <person name="Lin L."/>
            <person name="Yin J."/>
            <person name="Geng J."/>
            <person name="Li G."/>
            <person name="Shi J."/>
            <person name="Liu J."/>
            <person name="Lv H."/>
            <person name="Li J."/>
            <person name="Wang J."/>
            <person name="Deng Y."/>
            <person name="Ran L."/>
            <person name="Shi X."/>
            <person name="Wang X."/>
            <person name="Wu Q."/>
            <person name="Li C."/>
            <person name="Ren X."/>
            <person name="Wang J."/>
            <person name="Wang X."/>
            <person name="Li D."/>
            <person name="Liu D."/>
            <person name="Zhang X."/>
            <person name="Ji Z."/>
            <person name="Zhao W."/>
            <person name="Sun Y."/>
            <person name="Zhang Z."/>
            <person name="Bao J."/>
            <person name="Han Y."/>
            <person name="Dong L."/>
            <person name="Ji J."/>
            <person name="Chen P."/>
            <person name="Wu S."/>
            <person name="Liu J."/>
            <person name="Xiao Y."/>
            <person name="Bu D."/>
            <person name="Tan J."/>
            <person name="Yang L."/>
            <person name="Ye C."/>
            <person name="Zhang J."/>
            <person name="Xu J."/>
            <person name="Zhou Y."/>
            <person name="Yu Y."/>
            <person name="Zhang B."/>
            <person name="Zhuang S."/>
            <person name="Wei H."/>
            <person name="Liu B."/>
            <person name="Lei M."/>
            <person name="Yu H."/>
            <person name="Li Y."/>
            <person name="Xu H."/>
            <person name="Wei S."/>
            <person name="He X."/>
            <person name="Fang L."/>
            <person name="Zhang Z."/>
            <person name="Zhang Y."/>
            <person name="Huang X."/>
            <person name="Su Z."/>
            <person name="Tong W."/>
            <person name="Li J."/>
            <person name="Tong Z."/>
            <person name="Li S."/>
            <person name="Ye J."/>
            <person name="Wang L."/>
            <person name="Fang L."/>
            <person name="Lei T."/>
            <person name="Chen C.-S."/>
            <person name="Chen H.-C."/>
            <person name="Xu Z."/>
            <person name="Li H."/>
            <person name="Huang H."/>
            <person name="Zhang F."/>
            <person name="Xu H."/>
            <person name="Li N."/>
            <person name="Zhao C."/>
            <person name="Li S."/>
            <person name="Dong L."/>
            <person name="Huang Y."/>
            <person name="Li L."/>
            <person name="Xi Y."/>
            <person name="Qi Q."/>
            <person name="Li W."/>
            <person name="Zhang B."/>
            <person name="Hu W."/>
            <person name="Zhang Y."/>
            <person name="Tian X."/>
            <person name="Jiao Y."/>
            <person name="Liang X."/>
            <person name="Jin J."/>
            <person name="Gao L."/>
            <person name="Zheng W."/>
            <person name="Hao B."/>
            <person name="Liu S.-M."/>
            <person name="Wang W."/>
            <person name="Yuan L."/>
            <person name="Cao M."/>
            <person name="McDermott J."/>
            <person name="Samudrala R."/>
            <person name="Wang J."/>
            <person name="Wong G.K.-S."/>
            <person name="Yang H."/>
        </authorList>
    </citation>
    <scope>NUCLEOTIDE SEQUENCE [LARGE SCALE GENOMIC DNA]</scope>
    <source>
        <strain>cv. Nipponbare</strain>
    </source>
</reference>
<reference key="5">
    <citation type="journal article" date="2003" name="Science">
        <title>Collection, mapping, and annotation of over 28,000 cDNA clones from japonica rice.</title>
        <authorList>
            <consortium name="The rice full-length cDNA consortium"/>
        </authorList>
    </citation>
    <scope>NUCLEOTIDE SEQUENCE [LARGE SCALE MRNA]</scope>
    <source>
        <strain>cv. Nipponbare</strain>
    </source>
</reference>
<accession>Q0IZS0</accession>
<accession>A0A0P0XQA2</accession>
<comment type="function">
    <text evidence="1">Involved in the catabolism of quinolinic acid (QA).</text>
</comment>
<comment type="catalytic activity">
    <reaction>
        <text>nicotinate beta-D-ribonucleotide + CO2 + diphosphate = quinolinate + 5-phospho-alpha-D-ribose 1-diphosphate + 2 H(+)</text>
        <dbReference type="Rhea" id="RHEA:12733"/>
        <dbReference type="ChEBI" id="CHEBI:15378"/>
        <dbReference type="ChEBI" id="CHEBI:16526"/>
        <dbReference type="ChEBI" id="CHEBI:29959"/>
        <dbReference type="ChEBI" id="CHEBI:33019"/>
        <dbReference type="ChEBI" id="CHEBI:57502"/>
        <dbReference type="ChEBI" id="CHEBI:58017"/>
        <dbReference type="EC" id="2.4.2.19"/>
    </reaction>
</comment>
<comment type="pathway">
    <text>Cofactor biosynthesis; NAD(+) biosynthesis; nicotinate D-ribonucleotide from quinolinate: step 1/1.</text>
</comment>
<comment type="subcellular location">
    <subcellularLocation>
        <location>Plastid</location>
        <location>Chloroplast</location>
    </subcellularLocation>
</comment>
<comment type="similarity">
    <text evidence="3">Belongs to the NadC/ModD family.</text>
</comment>
<gene>
    <name type="ordered locus">Os09g0553600</name>
    <name type="ordered locus">LOC_Os09g38060</name>
    <name type="ORF">OsJ_30273</name>
</gene>
<evidence type="ECO:0000250" key="1"/>
<evidence type="ECO:0000255" key="2"/>
<evidence type="ECO:0000305" key="3"/>